<protein>
    <recommendedName>
        <fullName>Homeobox protein SHOOT MERISTEMLESS</fullName>
    </recommendedName>
</protein>
<dbReference type="EMBL" id="AF193813">
    <property type="protein sequence ID" value="AAF23753.2"/>
    <property type="molecule type" value="mRNA"/>
</dbReference>
<dbReference type="SMR" id="Q9M6D9"/>
<dbReference type="GO" id="GO:0005768">
    <property type="term" value="C:endosome"/>
    <property type="evidence" value="ECO:0007669"/>
    <property type="project" value="EnsemblPlants"/>
</dbReference>
<dbReference type="GO" id="GO:0015630">
    <property type="term" value="C:microtubule cytoskeleton"/>
    <property type="evidence" value="ECO:0007669"/>
    <property type="project" value="EnsemblPlants"/>
</dbReference>
<dbReference type="GO" id="GO:0005634">
    <property type="term" value="C:nucleus"/>
    <property type="evidence" value="ECO:0007669"/>
    <property type="project" value="UniProtKB-SubCell"/>
</dbReference>
<dbReference type="GO" id="GO:0005886">
    <property type="term" value="C:plasma membrane"/>
    <property type="evidence" value="ECO:0007669"/>
    <property type="project" value="EnsemblPlants"/>
</dbReference>
<dbReference type="GO" id="GO:0009506">
    <property type="term" value="C:plasmodesma"/>
    <property type="evidence" value="ECO:0007669"/>
    <property type="project" value="EnsemblPlants"/>
</dbReference>
<dbReference type="GO" id="GO:0003677">
    <property type="term" value="F:DNA binding"/>
    <property type="evidence" value="ECO:0007669"/>
    <property type="project" value="UniProtKB-KW"/>
</dbReference>
<dbReference type="GO" id="GO:0000981">
    <property type="term" value="F:DNA-binding transcription factor activity, RNA polymerase II-specific"/>
    <property type="evidence" value="ECO:0007669"/>
    <property type="project" value="InterPro"/>
</dbReference>
<dbReference type="GO" id="GO:0042803">
    <property type="term" value="F:protein homodimerization activity"/>
    <property type="evidence" value="ECO:0007669"/>
    <property type="project" value="EnsemblPlants"/>
</dbReference>
<dbReference type="GO" id="GO:0003723">
    <property type="term" value="F:RNA binding"/>
    <property type="evidence" value="ECO:0007669"/>
    <property type="project" value="EnsemblPlants"/>
</dbReference>
<dbReference type="GO" id="GO:0048440">
    <property type="term" value="P:carpel development"/>
    <property type="evidence" value="ECO:0007669"/>
    <property type="project" value="EnsemblPlants"/>
</dbReference>
<dbReference type="GO" id="GO:0010582">
    <property type="term" value="P:floral meristem determinacy"/>
    <property type="evidence" value="ECO:0007669"/>
    <property type="project" value="EnsemblPlants"/>
</dbReference>
<dbReference type="GO" id="GO:0009934">
    <property type="term" value="P:regulation of meristem structural organization"/>
    <property type="evidence" value="ECO:0007669"/>
    <property type="project" value="EnsemblPlants"/>
</dbReference>
<dbReference type="CDD" id="cd00086">
    <property type="entry name" value="homeodomain"/>
    <property type="match status" value="1"/>
</dbReference>
<dbReference type="FunFam" id="1.10.10.60:FF:000076">
    <property type="entry name" value="Homeobox protein knotted-1-like 2"/>
    <property type="match status" value="1"/>
</dbReference>
<dbReference type="Gene3D" id="1.10.10.60">
    <property type="entry name" value="Homeodomain-like"/>
    <property type="match status" value="1"/>
</dbReference>
<dbReference type="InterPro" id="IPR005539">
    <property type="entry name" value="ELK_dom"/>
</dbReference>
<dbReference type="InterPro" id="IPR001356">
    <property type="entry name" value="HD"/>
</dbReference>
<dbReference type="InterPro" id="IPR017970">
    <property type="entry name" value="Homeobox_CS"/>
</dbReference>
<dbReference type="InterPro" id="IPR009057">
    <property type="entry name" value="Homeodomain-like_sf"/>
</dbReference>
<dbReference type="InterPro" id="IPR008422">
    <property type="entry name" value="KN_HD"/>
</dbReference>
<dbReference type="InterPro" id="IPR005540">
    <property type="entry name" value="KNOX1"/>
</dbReference>
<dbReference type="InterPro" id="IPR005541">
    <property type="entry name" value="KNOX2"/>
</dbReference>
<dbReference type="InterPro" id="IPR050224">
    <property type="entry name" value="TALE_homeobox"/>
</dbReference>
<dbReference type="PANTHER" id="PTHR11850">
    <property type="entry name" value="HOMEOBOX PROTEIN TRANSCRIPTION FACTORS"/>
    <property type="match status" value="1"/>
</dbReference>
<dbReference type="Pfam" id="PF03789">
    <property type="entry name" value="ELK"/>
    <property type="match status" value="1"/>
</dbReference>
<dbReference type="Pfam" id="PF05920">
    <property type="entry name" value="Homeobox_KN"/>
    <property type="match status" value="1"/>
</dbReference>
<dbReference type="Pfam" id="PF03790">
    <property type="entry name" value="KNOX1"/>
    <property type="match status" value="1"/>
</dbReference>
<dbReference type="Pfam" id="PF03791">
    <property type="entry name" value="KNOX2"/>
    <property type="match status" value="1"/>
</dbReference>
<dbReference type="SMART" id="SM01188">
    <property type="entry name" value="ELK"/>
    <property type="match status" value="1"/>
</dbReference>
<dbReference type="SMART" id="SM00389">
    <property type="entry name" value="HOX"/>
    <property type="match status" value="1"/>
</dbReference>
<dbReference type="SMART" id="SM01255">
    <property type="entry name" value="KNOX1"/>
    <property type="match status" value="1"/>
</dbReference>
<dbReference type="SMART" id="SM01256">
    <property type="entry name" value="KNOX2"/>
    <property type="match status" value="1"/>
</dbReference>
<dbReference type="SUPFAM" id="SSF46689">
    <property type="entry name" value="Homeodomain-like"/>
    <property type="match status" value="1"/>
</dbReference>
<dbReference type="PROSITE" id="PS51213">
    <property type="entry name" value="ELK"/>
    <property type="match status" value="1"/>
</dbReference>
<dbReference type="PROSITE" id="PS00027">
    <property type="entry name" value="HOMEOBOX_1"/>
    <property type="match status" value="1"/>
</dbReference>
<dbReference type="PROSITE" id="PS50071">
    <property type="entry name" value="HOMEOBOX_2"/>
    <property type="match status" value="1"/>
</dbReference>
<accession>Q9M6D9</accession>
<organism>
    <name type="scientific">Brassica oleracea</name>
    <name type="common">Wild cabbage</name>
    <dbReference type="NCBI Taxonomy" id="3712"/>
    <lineage>
        <taxon>Eukaryota</taxon>
        <taxon>Viridiplantae</taxon>
        <taxon>Streptophyta</taxon>
        <taxon>Embryophyta</taxon>
        <taxon>Tracheophyta</taxon>
        <taxon>Spermatophyta</taxon>
        <taxon>Magnoliopsida</taxon>
        <taxon>eudicotyledons</taxon>
        <taxon>Gunneridae</taxon>
        <taxon>Pentapetalae</taxon>
        <taxon>rosids</taxon>
        <taxon>malvids</taxon>
        <taxon>Brassicales</taxon>
        <taxon>Brassicaceae</taxon>
        <taxon>Brassiceae</taxon>
        <taxon>Brassica</taxon>
    </lineage>
</organism>
<proteinExistence type="evidence at transcript level"/>
<feature type="chain" id="PRO_0000049317" description="Homeobox protein SHOOT MERISTEMLESS">
    <location>
        <begin position="1"/>
        <end position="383"/>
    </location>
</feature>
<feature type="domain" description="ELK" evidence="3">
    <location>
        <begin position="263"/>
        <end position="283"/>
    </location>
</feature>
<feature type="DNA-binding region" description="Homeobox; TALE-type" evidence="2">
    <location>
        <begin position="284"/>
        <end position="347"/>
    </location>
</feature>
<feature type="region of interest" description="Disordered" evidence="4">
    <location>
        <begin position="37"/>
        <end position="58"/>
    </location>
</feature>
<evidence type="ECO:0000250" key="1"/>
<evidence type="ECO:0000255" key="2">
    <source>
        <dbReference type="PROSITE-ProRule" id="PRU00108"/>
    </source>
</evidence>
<evidence type="ECO:0000255" key="3">
    <source>
        <dbReference type="PROSITE-ProRule" id="PRU00559"/>
    </source>
</evidence>
<evidence type="ECO:0000256" key="4">
    <source>
        <dbReference type="SAM" id="MobiDB-lite"/>
    </source>
</evidence>
<evidence type="ECO:0000305" key="5"/>
<keyword id="KW-0217">Developmental protein</keyword>
<keyword id="KW-0238">DNA-binding</keyword>
<keyword id="KW-0371">Homeobox</keyword>
<keyword id="KW-0539">Nucleus</keyword>
<sequence>MESGSNSTSCPMAFAGDNSDGPMCPMMMMMMPVITSHQQHHGHDQQHQHQQQHDGYAYQSHHQHSSLLFLQSLTPPSQEAKNKVRSSCSPSSGAPAYSFMEINHQNELLAGGLQSPVLSSLLVKAKIMAHPHYHRLLLAYVNCQKVGAPPEVQARLEETCSSAAAAAASMGPTGSLGEDPGLDQFMEAYCEMLVKYEQELSKPFKEAMVFLQHVECQFKSLSLSSPSSLGYGEAAIERNNNGSSEEEVDMNNEFVDPQAEDRELKGQLLRKYSGYLGSLKQEFMKKRKKGKLPKEARQQLLDWWSRHYKWPYPSEQQKLALAESTGLDQKQINNWFINQRKRHWKPSEDMQFVVMDATHPLHYFMGNVLGNPFPIDHISGTML</sequence>
<gene>
    <name type="primary">STM</name>
</gene>
<reference key="1">
    <citation type="online journal article" date="1999" name="Plant Gene Register">
        <title>Isolation and characterization of a cDNA clone encoding an STM homologue from rapid-cycling Brassica oleracea.</title>
        <authorList>
            <person name="Teo W."/>
            <person name="Swarup S."/>
        </authorList>
        <locator>PGR99-179</locator>
    </citation>
    <scope>NUCLEOTIDE SEQUENCE [MRNA]</scope>
</reference>
<comment type="function">
    <text evidence="1">Required for shoot apical meristem formation during embryogenesis. Probably binds to the DNA sequence 5'-TGAC-3' (By similarity).</text>
</comment>
<comment type="subcellular location">
    <subcellularLocation>
        <location evidence="5">Nucleus</location>
    </subcellularLocation>
</comment>
<comment type="similarity">
    <text evidence="3">Belongs to the TALE/KNOX homeobox family.</text>
</comment>
<name>STM_BRAOL</name>